<organism>
    <name type="scientific">Corynebacterium efficiens (strain DSM 44549 / YS-314 / AJ 12310 / JCM 11189 / NBRC 100395)</name>
    <dbReference type="NCBI Taxonomy" id="196164"/>
    <lineage>
        <taxon>Bacteria</taxon>
        <taxon>Bacillati</taxon>
        <taxon>Actinomycetota</taxon>
        <taxon>Actinomycetes</taxon>
        <taxon>Mycobacteriales</taxon>
        <taxon>Corynebacteriaceae</taxon>
        <taxon>Corynebacterium</taxon>
    </lineage>
</organism>
<sequence>MKAVLTRVSSASVTVGDEVVGSIDCPETGGLLALVGVGAADEPDAWETMVRKIAELRILDNEKSVSDVGAPVLLVSQFTLMGKTARGRRPSWSDAAAGGIAEPVMRRIATGLRERGIHVEEGRFGAMMKVASVNEGPFTVLVEC</sequence>
<gene>
    <name evidence="1" type="primary">dtd</name>
    <name type="ordered locus">CE1810</name>
</gene>
<keyword id="KW-0963">Cytoplasm</keyword>
<keyword id="KW-0378">Hydrolase</keyword>
<keyword id="KW-1185">Reference proteome</keyword>
<keyword id="KW-0694">RNA-binding</keyword>
<keyword id="KW-0820">tRNA-binding</keyword>
<feature type="chain" id="PRO_0000164533" description="D-aminoacyl-tRNA deacylase">
    <location>
        <begin position="1"/>
        <end position="144"/>
    </location>
</feature>
<feature type="short sequence motif" description="Gly-cisPro motif, important for rejection of L-amino acids" evidence="1">
    <location>
        <begin position="136"/>
        <end position="137"/>
    </location>
</feature>
<reference key="1">
    <citation type="journal article" date="2003" name="Genome Res.">
        <title>Comparative complete genome sequence analysis of the amino acid replacements responsible for the thermostability of Corynebacterium efficiens.</title>
        <authorList>
            <person name="Nishio Y."/>
            <person name="Nakamura Y."/>
            <person name="Kawarabayasi Y."/>
            <person name="Usuda Y."/>
            <person name="Kimura E."/>
            <person name="Sugimoto S."/>
            <person name="Matsui K."/>
            <person name="Yamagishi A."/>
            <person name="Kikuchi H."/>
            <person name="Ikeo K."/>
            <person name="Gojobori T."/>
        </authorList>
    </citation>
    <scope>NUCLEOTIDE SEQUENCE [LARGE SCALE GENOMIC DNA]</scope>
    <source>
        <strain>DSM 44549 / YS-314 / AJ 12310 / JCM 11189 / NBRC 100395</strain>
    </source>
</reference>
<comment type="function">
    <text evidence="1">An aminoacyl-tRNA editing enzyme that deacylates mischarged D-aminoacyl-tRNAs. Also deacylates mischarged glycyl-tRNA(Ala), protecting cells against glycine mischarging by AlaRS. Acts via tRNA-based rather than protein-based catalysis; rejects L-amino acids rather than detecting D-amino acids in the active site. By recycling D-aminoacyl-tRNA to D-amino acids and free tRNA molecules, this enzyme counteracts the toxicity associated with the formation of D-aminoacyl-tRNA entities in vivo and helps enforce protein L-homochirality.</text>
</comment>
<comment type="catalytic activity">
    <reaction evidence="1">
        <text>glycyl-tRNA(Ala) + H2O = tRNA(Ala) + glycine + H(+)</text>
        <dbReference type="Rhea" id="RHEA:53744"/>
        <dbReference type="Rhea" id="RHEA-COMP:9657"/>
        <dbReference type="Rhea" id="RHEA-COMP:13640"/>
        <dbReference type="ChEBI" id="CHEBI:15377"/>
        <dbReference type="ChEBI" id="CHEBI:15378"/>
        <dbReference type="ChEBI" id="CHEBI:57305"/>
        <dbReference type="ChEBI" id="CHEBI:78442"/>
        <dbReference type="ChEBI" id="CHEBI:78522"/>
        <dbReference type="EC" id="3.1.1.96"/>
    </reaction>
</comment>
<comment type="catalytic activity">
    <reaction evidence="1">
        <text>a D-aminoacyl-tRNA + H2O = a tRNA + a D-alpha-amino acid + H(+)</text>
        <dbReference type="Rhea" id="RHEA:13953"/>
        <dbReference type="Rhea" id="RHEA-COMP:10123"/>
        <dbReference type="Rhea" id="RHEA-COMP:10124"/>
        <dbReference type="ChEBI" id="CHEBI:15377"/>
        <dbReference type="ChEBI" id="CHEBI:15378"/>
        <dbReference type="ChEBI" id="CHEBI:59871"/>
        <dbReference type="ChEBI" id="CHEBI:78442"/>
        <dbReference type="ChEBI" id="CHEBI:79333"/>
        <dbReference type="EC" id="3.1.1.96"/>
    </reaction>
</comment>
<comment type="subunit">
    <text evidence="1">Homodimer.</text>
</comment>
<comment type="subcellular location">
    <subcellularLocation>
        <location evidence="1">Cytoplasm</location>
    </subcellularLocation>
</comment>
<comment type="domain">
    <text evidence="1">A Gly-cisPro motif from one monomer fits into the active site of the other monomer to allow specific chiral rejection of L-amino acids.</text>
</comment>
<comment type="similarity">
    <text evidence="1">Belongs to the DTD family.</text>
</comment>
<evidence type="ECO:0000255" key="1">
    <source>
        <dbReference type="HAMAP-Rule" id="MF_00518"/>
    </source>
</evidence>
<proteinExistence type="inferred from homology"/>
<protein>
    <recommendedName>
        <fullName evidence="1">D-aminoacyl-tRNA deacylase</fullName>
        <shortName evidence="1">DTD</shortName>
        <ecNumber evidence="1">3.1.1.96</ecNumber>
    </recommendedName>
    <alternativeName>
        <fullName evidence="1">Gly-tRNA(Ala) deacylase</fullName>
    </alternativeName>
</protein>
<accession>Q8FPG8</accession>
<dbReference type="EC" id="3.1.1.96" evidence="1"/>
<dbReference type="EMBL" id="BA000035">
    <property type="protein sequence ID" value="BAC18620.1"/>
    <property type="molecule type" value="Genomic_DNA"/>
</dbReference>
<dbReference type="RefSeq" id="WP_006767809.1">
    <property type="nucleotide sequence ID" value="NC_004369.1"/>
</dbReference>
<dbReference type="SMR" id="Q8FPG8"/>
<dbReference type="STRING" id="196164.gene:10742238"/>
<dbReference type="KEGG" id="cef:CE1810"/>
<dbReference type="eggNOG" id="COG1490">
    <property type="taxonomic scope" value="Bacteria"/>
</dbReference>
<dbReference type="HOGENOM" id="CLU_076901_1_2_11"/>
<dbReference type="OrthoDB" id="9801395at2"/>
<dbReference type="Proteomes" id="UP000001409">
    <property type="component" value="Chromosome"/>
</dbReference>
<dbReference type="GO" id="GO:0005737">
    <property type="term" value="C:cytoplasm"/>
    <property type="evidence" value="ECO:0007669"/>
    <property type="project" value="UniProtKB-SubCell"/>
</dbReference>
<dbReference type="GO" id="GO:0051500">
    <property type="term" value="F:D-tyrosyl-tRNA(Tyr) deacylase activity"/>
    <property type="evidence" value="ECO:0007669"/>
    <property type="project" value="TreeGrafter"/>
</dbReference>
<dbReference type="GO" id="GO:0106026">
    <property type="term" value="F:Gly-tRNA(Ala) deacylase activity"/>
    <property type="evidence" value="ECO:0007669"/>
    <property type="project" value="UniProtKB-UniRule"/>
</dbReference>
<dbReference type="GO" id="GO:0043908">
    <property type="term" value="F:Ser(Gly)-tRNA(Ala) hydrolase activity"/>
    <property type="evidence" value="ECO:0007669"/>
    <property type="project" value="UniProtKB-UniRule"/>
</dbReference>
<dbReference type="GO" id="GO:0000049">
    <property type="term" value="F:tRNA binding"/>
    <property type="evidence" value="ECO:0007669"/>
    <property type="project" value="UniProtKB-UniRule"/>
</dbReference>
<dbReference type="GO" id="GO:0019478">
    <property type="term" value="P:D-amino acid catabolic process"/>
    <property type="evidence" value="ECO:0007669"/>
    <property type="project" value="UniProtKB-UniRule"/>
</dbReference>
<dbReference type="Gene3D" id="3.50.80.10">
    <property type="entry name" value="D-tyrosyl-tRNA(Tyr) deacylase"/>
    <property type="match status" value="1"/>
</dbReference>
<dbReference type="HAMAP" id="MF_00518">
    <property type="entry name" value="Deacylase_Dtd"/>
    <property type="match status" value="1"/>
</dbReference>
<dbReference type="InterPro" id="IPR003732">
    <property type="entry name" value="Daa-tRNA_deacyls_DTD"/>
</dbReference>
<dbReference type="InterPro" id="IPR023509">
    <property type="entry name" value="DTD-like_sf"/>
</dbReference>
<dbReference type="NCBIfam" id="TIGR00256">
    <property type="entry name" value="D-aminoacyl-tRNA deacylase"/>
    <property type="match status" value="1"/>
</dbReference>
<dbReference type="PANTHER" id="PTHR10472:SF5">
    <property type="entry name" value="D-AMINOACYL-TRNA DEACYLASE 1"/>
    <property type="match status" value="1"/>
</dbReference>
<dbReference type="PANTHER" id="PTHR10472">
    <property type="entry name" value="D-TYROSYL-TRNA TYR DEACYLASE"/>
    <property type="match status" value="1"/>
</dbReference>
<dbReference type="Pfam" id="PF02580">
    <property type="entry name" value="Tyr_Deacylase"/>
    <property type="match status" value="1"/>
</dbReference>
<dbReference type="SUPFAM" id="SSF69500">
    <property type="entry name" value="DTD-like"/>
    <property type="match status" value="1"/>
</dbReference>
<name>DTD_COREF</name>